<protein>
    <recommendedName>
        <fullName>Nucleoprotein</fullName>
    </recommendedName>
    <alternativeName>
        <fullName>Nucleocapsid protein</fullName>
        <shortName>NP</shortName>
        <shortName>Protein N</shortName>
    </alternativeName>
</protein>
<evidence type="ECO:0000250" key="1">
    <source>
        <dbReference type="UniProtKB" id="O57286"/>
    </source>
</evidence>
<evidence type="ECO:0000250" key="2">
    <source>
        <dbReference type="UniProtKB" id="P06159"/>
    </source>
</evidence>
<evidence type="ECO:0000250" key="3">
    <source>
        <dbReference type="UniProtKB" id="Q07097"/>
    </source>
</evidence>
<evidence type="ECO:0000256" key="4">
    <source>
        <dbReference type="SAM" id="MobiDB-lite"/>
    </source>
</evidence>
<evidence type="ECO:0000305" key="5"/>
<dbReference type="EMBL" id="Y00114">
    <property type="protein sequence ID" value="CAA68293.1"/>
    <property type="molecule type" value="Genomic_DNA"/>
</dbReference>
<dbReference type="EMBL" id="D84095">
    <property type="protein sequence ID" value="BAA12213.1"/>
    <property type="molecule type" value="Genomic_RNA"/>
</dbReference>
<dbReference type="SMR" id="P06161"/>
<dbReference type="Proteomes" id="UP000133413">
    <property type="component" value="Genome"/>
</dbReference>
<dbReference type="GO" id="GO:0019029">
    <property type="term" value="C:helical viral capsid"/>
    <property type="evidence" value="ECO:0007669"/>
    <property type="project" value="UniProtKB-KW"/>
</dbReference>
<dbReference type="GO" id="GO:0030430">
    <property type="term" value="C:host cell cytoplasm"/>
    <property type="evidence" value="ECO:0007669"/>
    <property type="project" value="UniProtKB-SubCell"/>
</dbReference>
<dbReference type="GO" id="GO:1990904">
    <property type="term" value="C:ribonucleoprotein complex"/>
    <property type="evidence" value="ECO:0007669"/>
    <property type="project" value="UniProtKB-KW"/>
</dbReference>
<dbReference type="GO" id="GO:0019013">
    <property type="term" value="C:viral nucleocapsid"/>
    <property type="evidence" value="ECO:0007669"/>
    <property type="project" value="UniProtKB-KW"/>
</dbReference>
<dbReference type="GO" id="GO:0003723">
    <property type="term" value="F:RNA binding"/>
    <property type="evidence" value="ECO:0007669"/>
    <property type="project" value="UniProtKB-KW"/>
</dbReference>
<dbReference type="GO" id="GO:0005198">
    <property type="term" value="F:structural molecule activity"/>
    <property type="evidence" value="ECO:0007669"/>
    <property type="project" value="InterPro"/>
</dbReference>
<dbReference type="InterPro" id="IPR002021">
    <property type="entry name" value="Paramyx_ncap"/>
</dbReference>
<dbReference type="Pfam" id="PF00973">
    <property type="entry name" value="Paramyxo_ncap"/>
    <property type="match status" value="1"/>
</dbReference>
<organismHost>
    <name type="scientific">Bos taurus</name>
    <name type="common">Bovine</name>
    <dbReference type="NCBI Taxonomy" id="9913"/>
</organismHost>
<proteinExistence type="inferred from homology"/>
<comment type="function">
    <text evidence="2 3">Forms the helical nucleocapsid (NC) in a ratio of 1 N per 6 ribonucleotides, protecting the genome from nucleases (By similarity). The encapsidated genomic RNA serves as template for transcription and replication; encapsidation by N is coupled to RNA synthesis. Forms the encapsidation complex with the phosphoprotein protein P. Before encapsidation, the newly synthesized free N protein, so-called N0, is chaperoned by P (By similarity).</text>
</comment>
<comment type="subunit">
    <text evidence="1 2 3">Homomultimer; forms the nucleocapsid (By similarity). Binds to the viral genomic RNA (By similarity). N0 interacts with the phosphoprotein (via N-terminus); this interaction allows P to chaperon N0 to avoid N polymerization before encapsidation (By similarity). Interacts as N-RNA template with the phosphoprotein (via C-terminus); this interaction positions the polymerase on the template (By similarity).</text>
</comment>
<comment type="subcellular location">
    <subcellularLocation>
        <location evidence="5">Virion</location>
    </subcellularLocation>
    <subcellularLocation>
        <location>Host cytoplasm</location>
    </subcellularLocation>
</comment>
<comment type="domain">
    <text evidence="2">Ncore is globular and carries regions required for self-assembly and RNA-binding. Ntail is an intrinsically disordered monomeric domain in the C-terminus.</text>
</comment>
<comment type="similarity">
    <text evidence="5">Belongs to the paramyxoviruses nucleocapsid family.</text>
</comment>
<gene>
    <name type="primary">N</name>
    <name type="synonym">NP</name>
</gene>
<accession>P06161</accession>
<sequence>MLSLFDTFSARRQENITKSAGGAVIPGQKNTVSIFALGPSITDDNDKMTLALLFLSHSLDNEKQHAQRAGFLVSLLSMAYANPELYLTSNGSNADVKYVIYMIEKDPGRQKYGGLVVKTREMVYEKTTDWMFGSDLEYDQDNMLQNGRSTSTIEDLVHTFGYPSCLGALIIQVWIILVKAITSISGLRKGFFTRLEAFRQDGTVKSSLVLSGDAVEQIGSIMRSQQSLVTLMVETLITMNTGRNDLTTIEKNIQIVGNYIRDAGLASFFNTIRYGIETRMAALTLSTLRPDINRLKALIELYLSKGPRAPFICILRDPVHGEFAPGNYPALWSYAMGVAVVQNKAMQQYVTGRSYLDIEMFQLGQAVARDAESQMSSILEDELGVTQEAKQSLKKHMKNISSSDTTFHKPTGGSAIEMAIDEEAEQPESRGDQDQGNEPQSSIVPYAWADETRSDTQTESVTEIESIKTEQRNIRDRLNKRLNEKRKQSDPKSTNIANDTNQTEIDDLFSAFGNN</sequence>
<name>NCAP_PI3B</name>
<organism>
    <name type="scientific">Bovine parainfluenza 3 virus</name>
    <name type="common">BPIV-3</name>
    <dbReference type="NCBI Taxonomy" id="3052729"/>
    <lineage>
        <taxon>Viruses</taxon>
        <taxon>Riboviria</taxon>
        <taxon>Orthornavirae</taxon>
        <taxon>Negarnaviricota</taxon>
        <taxon>Haploviricotina</taxon>
        <taxon>Monjiviricetes</taxon>
        <taxon>Mononegavirales</taxon>
        <taxon>Paramyxoviridae</taxon>
        <taxon>Feraresvirinae</taxon>
        <taxon>Respirovirus</taxon>
    </lineage>
</organism>
<reference key="1">
    <citation type="journal article" date="1987" name="Nucleic Acids Res.">
        <title>Nucleotide sequence of the bovine parainfluenza 3 virus genome: its 3' end and the genes of NP, P, C and M proteins.</title>
        <authorList>
            <person name="Sakai Y."/>
            <person name="Suzu S."/>
            <person name="Shioda T."/>
            <person name="Shibuta H."/>
        </authorList>
    </citation>
    <scope>NUCLEOTIDE SEQUENCE [GENOMIC RNA]</scope>
    <source>
        <strain>Isolate 910N</strain>
    </source>
</reference>
<feature type="chain" id="PRO_0000142666" description="Nucleoprotein">
    <location>
        <begin position="1"/>
        <end position="515"/>
    </location>
</feature>
<feature type="region of interest" description="Ncore" evidence="2">
    <location>
        <begin position="1"/>
        <end position="403"/>
    </location>
</feature>
<feature type="region of interest" description="Ntail" evidence="2">
    <location>
        <begin position="404"/>
        <end position="515"/>
    </location>
</feature>
<feature type="region of interest" description="Disordered" evidence="4">
    <location>
        <begin position="424"/>
        <end position="515"/>
    </location>
</feature>
<feature type="region of interest" description="Interaction with the phosphoprotein" evidence="3">
    <location>
        <begin position="457"/>
        <end position="466"/>
    </location>
</feature>
<feature type="compositionally biased region" description="Polar residues" evidence="4">
    <location>
        <begin position="434"/>
        <end position="443"/>
    </location>
</feature>
<feature type="compositionally biased region" description="Basic and acidic residues" evidence="4">
    <location>
        <begin position="465"/>
        <end position="490"/>
    </location>
</feature>
<feature type="compositionally biased region" description="Polar residues" evidence="4">
    <location>
        <begin position="491"/>
        <end position="503"/>
    </location>
</feature>
<feature type="binding site" evidence="1">
    <location>
        <position position="179"/>
    </location>
    <ligand>
        <name>RNA</name>
        <dbReference type="ChEBI" id="CHEBI:33697"/>
    </ligand>
</feature>
<feature type="binding site" evidence="1">
    <location>
        <position position="189"/>
    </location>
    <ligand>
        <name>RNA</name>
        <dbReference type="ChEBI" id="CHEBI:33697"/>
    </ligand>
</feature>
<feature type="binding site" evidence="1">
    <location>
        <position position="194"/>
    </location>
    <ligand>
        <name>RNA</name>
        <dbReference type="ChEBI" id="CHEBI:33697"/>
    </ligand>
</feature>
<feature type="binding site" evidence="1">
    <location>
        <position position="259"/>
    </location>
    <ligand>
        <name>RNA</name>
        <dbReference type="ChEBI" id="CHEBI:33697"/>
    </ligand>
</feature>
<feature type="binding site" evidence="1">
    <location>
        <position position="349"/>
    </location>
    <ligand>
        <name>RNA</name>
        <dbReference type="ChEBI" id="CHEBI:33697"/>
    </ligand>
</feature>
<feature type="binding site" evidence="1">
    <location>
        <position position="353"/>
    </location>
    <ligand>
        <name>RNA</name>
        <dbReference type="ChEBI" id="CHEBI:33697"/>
    </ligand>
</feature>
<keyword id="KW-0167">Capsid protein</keyword>
<keyword id="KW-1139">Helical capsid protein</keyword>
<keyword id="KW-1035">Host cytoplasm</keyword>
<keyword id="KW-0687">Ribonucleoprotein</keyword>
<keyword id="KW-0694">RNA-binding</keyword>
<keyword id="KW-0543">Viral nucleoprotein</keyword>
<keyword id="KW-0946">Virion</keyword>